<comment type="function">
    <text evidence="1">This protein binds specifically to 23S rRNA; its binding is stimulated by other ribosomal proteins, e.g. L4, L17, and L20. It is important during the early stages of 50S assembly. It makes multiple contacts with different domains of the 23S rRNA in the assembled 50S subunit and ribosome (By similarity).</text>
</comment>
<comment type="function">
    <text evidence="1">The globular domain of the protein is located near the polypeptide exit tunnel on the outside of the subunit, while an extended beta-hairpin is found that lines the wall of the exit tunnel in the center of the 70S ribosome.</text>
</comment>
<comment type="subunit">
    <text evidence="1">Part of the 50S ribosomal subunit.</text>
</comment>
<comment type="similarity">
    <text evidence="1">Belongs to the universal ribosomal protein uL22 family.</text>
</comment>
<evidence type="ECO:0000255" key="1">
    <source>
        <dbReference type="HAMAP-Rule" id="MF_01331"/>
    </source>
</evidence>
<evidence type="ECO:0000305" key="2"/>
<accession>Q5HDW3</accession>
<feature type="chain" id="PRO_0000125221" description="Large ribosomal subunit protein uL22">
    <location>
        <begin position="1"/>
        <end position="117"/>
    </location>
</feature>
<reference key="1">
    <citation type="journal article" date="2005" name="J. Bacteriol.">
        <title>Insights on evolution of virulence and resistance from the complete genome analysis of an early methicillin-resistant Staphylococcus aureus strain and a biofilm-producing methicillin-resistant Staphylococcus epidermidis strain.</title>
        <authorList>
            <person name="Gill S.R."/>
            <person name="Fouts D.E."/>
            <person name="Archer G.L."/>
            <person name="Mongodin E.F."/>
            <person name="DeBoy R.T."/>
            <person name="Ravel J."/>
            <person name="Paulsen I.T."/>
            <person name="Kolonay J.F."/>
            <person name="Brinkac L.M."/>
            <person name="Beanan M.J."/>
            <person name="Dodson R.J."/>
            <person name="Daugherty S.C."/>
            <person name="Madupu R."/>
            <person name="Angiuoli S.V."/>
            <person name="Durkin A.S."/>
            <person name="Haft D.H."/>
            <person name="Vamathevan J.J."/>
            <person name="Khouri H."/>
            <person name="Utterback T.R."/>
            <person name="Lee C."/>
            <person name="Dimitrov G."/>
            <person name="Jiang L."/>
            <person name="Qin H."/>
            <person name="Weidman J."/>
            <person name="Tran K."/>
            <person name="Kang K.H."/>
            <person name="Hance I.R."/>
            <person name="Nelson K.E."/>
            <person name="Fraser C.M."/>
        </authorList>
    </citation>
    <scope>NUCLEOTIDE SEQUENCE [LARGE SCALE GENOMIC DNA]</scope>
    <source>
        <strain>COL</strain>
    </source>
</reference>
<dbReference type="EMBL" id="CP000046">
    <property type="protein sequence ID" value="AAW37109.1"/>
    <property type="molecule type" value="Genomic_DNA"/>
</dbReference>
<dbReference type="RefSeq" id="WP_000387527.1">
    <property type="nucleotide sequence ID" value="NZ_JBGOFO010000004.1"/>
</dbReference>
<dbReference type="SMR" id="Q5HDW3"/>
<dbReference type="GeneID" id="98346557"/>
<dbReference type="KEGG" id="sac:SACOL2234"/>
<dbReference type="HOGENOM" id="CLU_083987_3_3_9"/>
<dbReference type="Proteomes" id="UP000000530">
    <property type="component" value="Chromosome"/>
</dbReference>
<dbReference type="GO" id="GO:0022625">
    <property type="term" value="C:cytosolic large ribosomal subunit"/>
    <property type="evidence" value="ECO:0007669"/>
    <property type="project" value="TreeGrafter"/>
</dbReference>
<dbReference type="GO" id="GO:0019843">
    <property type="term" value="F:rRNA binding"/>
    <property type="evidence" value="ECO:0007669"/>
    <property type="project" value="UniProtKB-UniRule"/>
</dbReference>
<dbReference type="GO" id="GO:0003735">
    <property type="term" value="F:structural constituent of ribosome"/>
    <property type="evidence" value="ECO:0007669"/>
    <property type="project" value="InterPro"/>
</dbReference>
<dbReference type="GO" id="GO:0006412">
    <property type="term" value="P:translation"/>
    <property type="evidence" value="ECO:0007669"/>
    <property type="project" value="UniProtKB-UniRule"/>
</dbReference>
<dbReference type="CDD" id="cd00336">
    <property type="entry name" value="Ribosomal_L22"/>
    <property type="match status" value="1"/>
</dbReference>
<dbReference type="FunFam" id="3.90.470.10:FF:000001">
    <property type="entry name" value="50S ribosomal protein L22"/>
    <property type="match status" value="1"/>
</dbReference>
<dbReference type="Gene3D" id="3.90.470.10">
    <property type="entry name" value="Ribosomal protein L22/L17"/>
    <property type="match status" value="1"/>
</dbReference>
<dbReference type="HAMAP" id="MF_01331_B">
    <property type="entry name" value="Ribosomal_uL22_B"/>
    <property type="match status" value="1"/>
</dbReference>
<dbReference type="InterPro" id="IPR001063">
    <property type="entry name" value="Ribosomal_uL22"/>
</dbReference>
<dbReference type="InterPro" id="IPR005727">
    <property type="entry name" value="Ribosomal_uL22_bac/chlpt-type"/>
</dbReference>
<dbReference type="InterPro" id="IPR047867">
    <property type="entry name" value="Ribosomal_uL22_bac/org-type"/>
</dbReference>
<dbReference type="InterPro" id="IPR018260">
    <property type="entry name" value="Ribosomal_uL22_CS"/>
</dbReference>
<dbReference type="InterPro" id="IPR036394">
    <property type="entry name" value="Ribosomal_uL22_sf"/>
</dbReference>
<dbReference type="NCBIfam" id="TIGR01044">
    <property type="entry name" value="rplV_bact"/>
    <property type="match status" value="1"/>
</dbReference>
<dbReference type="PANTHER" id="PTHR13501">
    <property type="entry name" value="CHLOROPLAST 50S RIBOSOMAL PROTEIN L22-RELATED"/>
    <property type="match status" value="1"/>
</dbReference>
<dbReference type="PANTHER" id="PTHR13501:SF8">
    <property type="entry name" value="LARGE RIBOSOMAL SUBUNIT PROTEIN UL22M"/>
    <property type="match status" value="1"/>
</dbReference>
<dbReference type="Pfam" id="PF00237">
    <property type="entry name" value="Ribosomal_L22"/>
    <property type="match status" value="1"/>
</dbReference>
<dbReference type="SUPFAM" id="SSF54843">
    <property type="entry name" value="Ribosomal protein L22"/>
    <property type="match status" value="1"/>
</dbReference>
<dbReference type="PROSITE" id="PS00464">
    <property type="entry name" value="RIBOSOMAL_L22"/>
    <property type="match status" value="1"/>
</dbReference>
<gene>
    <name evidence="1" type="primary">rplV</name>
    <name type="ordered locus">SACOL2234</name>
</gene>
<keyword id="KW-0687">Ribonucleoprotein</keyword>
<keyword id="KW-0689">Ribosomal protein</keyword>
<keyword id="KW-0694">RNA-binding</keyword>
<keyword id="KW-0699">rRNA-binding</keyword>
<name>RL22_STAAC</name>
<organism>
    <name type="scientific">Staphylococcus aureus (strain COL)</name>
    <dbReference type="NCBI Taxonomy" id="93062"/>
    <lineage>
        <taxon>Bacteria</taxon>
        <taxon>Bacillati</taxon>
        <taxon>Bacillota</taxon>
        <taxon>Bacilli</taxon>
        <taxon>Bacillales</taxon>
        <taxon>Staphylococcaceae</taxon>
        <taxon>Staphylococcus</taxon>
    </lineage>
</organism>
<protein>
    <recommendedName>
        <fullName evidence="1">Large ribosomal subunit protein uL22</fullName>
    </recommendedName>
    <alternativeName>
        <fullName evidence="2">50S ribosomal protein L22</fullName>
    </alternativeName>
</protein>
<sequence length="117" mass="12835">MEAKAVARTIRIAPRKVRLVLDLIRGKNAAEAIAILKLTNKASSPVIEKVLMSALANAEHNYDMNTDELVVKEAYANEGPTLKRFRPRAQGRASAINKRTSHITIVVSDGKEEAKEA</sequence>
<proteinExistence type="inferred from homology"/>